<name>YML33_YEAST</name>
<reference key="1">
    <citation type="journal article" date="1997" name="Nature">
        <title>The nucleotide sequence of Saccharomyces cerevisiae chromosome XIII.</title>
        <authorList>
            <person name="Bowman S."/>
            <person name="Churcher C.M."/>
            <person name="Badcock K."/>
            <person name="Brown D."/>
            <person name="Chillingworth T."/>
            <person name="Connor R."/>
            <person name="Dedman K."/>
            <person name="Devlin K."/>
            <person name="Gentles S."/>
            <person name="Hamlin N."/>
            <person name="Hunt S."/>
            <person name="Jagels K."/>
            <person name="Lye G."/>
            <person name="Moule S."/>
            <person name="Odell C."/>
            <person name="Pearson D."/>
            <person name="Rajandream M.A."/>
            <person name="Rice P."/>
            <person name="Skelton J."/>
            <person name="Walsh S.V."/>
            <person name="Whitehead S."/>
            <person name="Barrell B.G."/>
        </authorList>
    </citation>
    <scope>NUCLEOTIDE SEQUENCE [LARGE SCALE GENOMIC DNA]</scope>
    <source>
        <strain>ATCC 204508 / S288c</strain>
    </source>
</reference>
<reference key="2">
    <citation type="journal article" date="2014" name="G3 (Bethesda)">
        <title>The reference genome sequence of Saccharomyces cerevisiae: Then and now.</title>
        <authorList>
            <person name="Engel S.R."/>
            <person name="Dietrich F.S."/>
            <person name="Fisk D.G."/>
            <person name="Binkley G."/>
            <person name="Balakrishnan R."/>
            <person name="Costanzo M.C."/>
            <person name="Dwight S.S."/>
            <person name="Hitz B.C."/>
            <person name="Karra K."/>
            <person name="Nash R.S."/>
            <person name="Weng S."/>
            <person name="Wong E.D."/>
            <person name="Lloyd P."/>
            <person name="Skrzypek M.S."/>
            <person name="Miyasato S.R."/>
            <person name="Simison M."/>
            <person name="Cherry J.M."/>
        </authorList>
    </citation>
    <scope>GENOME REANNOTATION</scope>
    <source>
        <strain>ATCC 204508 / S288c</strain>
    </source>
</reference>
<reference key="3">
    <citation type="journal article" date="2002" name="Nat. Biotechnol.">
        <title>An integrated approach for finding overlooked genes in yeast.</title>
        <authorList>
            <person name="Kumar A."/>
            <person name="Harrison P.M."/>
            <person name="Cheung K.-H."/>
            <person name="Lan N."/>
            <person name="Echols N."/>
            <person name="Bertone P."/>
            <person name="Miller P."/>
            <person name="Gerstein M.B."/>
            <person name="Snyder M."/>
        </authorList>
    </citation>
    <scope>NUCLEOTIDE SEQUENCE [GENOMIC DNA]</scope>
</reference>
<comment type="subcellular location">
    <subcellularLocation>
        <location evidence="3">Membrane</location>
        <topology evidence="3">Single-pass membrane protein</topology>
    </subcellularLocation>
</comment>
<comment type="miscellaneous">
    <text evidence="3">Completely overlaps YML133C.</text>
</comment>
<comment type="caution">
    <text evidence="4">Product of a dubious gene prediction unlikely to encode a functional protein. Because of that it is not part of the S.cerevisiae S288c complete/reference proteome set.</text>
</comment>
<protein>
    <recommendedName>
        <fullName>Putative uncharacterized protein YML133W-A</fullName>
    </recommendedName>
</protein>
<feature type="signal peptide" evidence="1">
    <location>
        <begin position="1"/>
        <end position="17"/>
    </location>
</feature>
<feature type="chain" id="PRO_0000406006" description="Putative uncharacterized protein YML133W-A">
    <location>
        <begin position="18"/>
        <end position="191"/>
    </location>
</feature>
<feature type="transmembrane region" description="Helical" evidence="1">
    <location>
        <begin position="168"/>
        <end position="188"/>
    </location>
</feature>
<feature type="region of interest" description="Disordered" evidence="2">
    <location>
        <begin position="82"/>
        <end position="148"/>
    </location>
</feature>
<gene>
    <name type="ordered locus">YML133W-A</name>
</gene>
<dbReference type="EMBL" id="Z50178">
    <property type="status" value="NOT_ANNOTATED_CDS"/>
    <property type="molecule type" value="Genomic_DNA"/>
</dbReference>
<dbReference type="EMBL" id="AF479970">
    <property type="protein sequence ID" value="AAL79283.1"/>
    <property type="molecule type" value="Genomic_DNA"/>
</dbReference>
<dbReference type="EnsemblFungi" id="YER190C-A_mRNA">
    <property type="protein sequence ID" value="YER190C-A"/>
    <property type="gene ID" value="YER190C-A"/>
</dbReference>
<dbReference type="EnsemblFungi" id="YGR296C-A_mRNA">
    <property type="protein sequence ID" value="YGR296C-A"/>
    <property type="gene ID" value="YGR296C-A"/>
</dbReference>
<dbReference type="EnsemblFungi" id="YML133W-A_mRNA">
    <property type="protein sequence ID" value="YML133W-A"/>
    <property type="gene ID" value="YML133W-A"/>
</dbReference>
<dbReference type="EnsemblFungi" id="YNL339W-A_mRNA">
    <property type="protein sequence ID" value="YNL339W-A"/>
    <property type="gene ID" value="YNL339W-A"/>
</dbReference>
<dbReference type="EnsemblFungi" id="YPL283W-A_mRNA">
    <property type="protein sequence ID" value="YPL283W-A"/>
    <property type="gene ID" value="YPL283W-A"/>
</dbReference>
<dbReference type="AGR" id="SGD:S000028689"/>
<dbReference type="SGD" id="S000028689">
    <property type="gene designation" value="YML133W-A"/>
</dbReference>
<dbReference type="HOGENOM" id="CLU_106419_0_0_1"/>
<dbReference type="OMA" id="CAHGATM"/>
<dbReference type="GO" id="GO:0016020">
    <property type="term" value="C:membrane"/>
    <property type="evidence" value="ECO:0007669"/>
    <property type="project" value="UniProtKB-SubCell"/>
</dbReference>
<keyword id="KW-0472">Membrane</keyword>
<keyword id="KW-0732">Signal</keyword>
<keyword id="KW-0812">Transmembrane</keyword>
<keyword id="KW-1133">Transmembrane helix</keyword>
<sequence length="191" mass="17367">MESIILSIAIFIGVLLGTSVGTFSGSGISAGVGASSGSGISAGVGASSGSSTSVGVGTFGGSSTSVGVGTFGGSSTSVGVGTFSGSRTSPDVDAGSGSSTSPDVGAGSGSSISAGVGTFSGSRTSPDVDAGSGSSTSPDVGAGSGSSISAGVGSRIGTGISTTMNARVAVLITAAILSAPVTAIALLEARR</sequence>
<accession>P0CL29</accession>
<accession>Q8TFA6</accession>
<proteinExistence type="uncertain"/>
<organism>
    <name type="scientific">Saccharomyces cerevisiae (strain ATCC 204508 / S288c)</name>
    <name type="common">Baker's yeast</name>
    <dbReference type="NCBI Taxonomy" id="559292"/>
    <lineage>
        <taxon>Eukaryota</taxon>
        <taxon>Fungi</taxon>
        <taxon>Dikarya</taxon>
        <taxon>Ascomycota</taxon>
        <taxon>Saccharomycotina</taxon>
        <taxon>Saccharomycetes</taxon>
        <taxon>Saccharomycetales</taxon>
        <taxon>Saccharomycetaceae</taxon>
        <taxon>Saccharomyces</taxon>
    </lineage>
</organism>
<evidence type="ECO:0000255" key="1"/>
<evidence type="ECO:0000256" key="2">
    <source>
        <dbReference type="SAM" id="MobiDB-lite"/>
    </source>
</evidence>
<evidence type="ECO:0000305" key="3"/>
<evidence type="ECO:0000305" key="4">
    <source>
    </source>
</evidence>